<dbReference type="EMBL" id="AE009441">
    <property type="protein sequence ID" value="AAL63263.1"/>
    <property type="molecule type" value="Genomic_DNA"/>
</dbReference>
<dbReference type="RefSeq" id="WP_011007735.1">
    <property type="nucleotide sequence ID" value="NC_003364.1"/>
</dbReference>
<dbReference type="SMR" id="Q8ZXT3"/>
<dbReference type="FunCoup" id="Q8ZXT3">
    <property type="interactions" value="50"/>
</dbReference>
<dbReference type="STRING" id="178306.PAE1111"/>
<dbReference type="EnsemblBacteria" id="AAL63263">
    <property type="protein sequence ID" value="AAL63263"/>
    <property type="gene ID" value="PAE1111"/>
</dbReference>
<dbReference type="GeneID" id="1465499"/>
<dbReference type="KEGG" id="pai:PAE1111"/>
<dbReference type="PATRIC" id="fig|178306.9.peg.824"/>
<dbReference type="eggNOG" id="arCOG04225">
    <property type="taxonomic scope" value="Archaea"/>
</dbReference>
<dbReference type="HOGENOM" id="CLU_046550_7_0_2"/>
<dbReference type="InParanoid" id="Q8ZXT3"/>
<dbReference type="Proteomes" id="UP000002439">
    <property type="component" value="Chromosome"/>
</dbReference>
<dbReference type="CDD" id="cd02907">
    <property type="entry name" value="Macro_Af1521_BAL-like"/>
    <property type="match status" value="1"/>
</dbReference>
<dbReference type="Gene3D" id="3.40.220.10">
    <property type="entry name" value="Leucine Aminopeptidase, subunit E, domain 1"/>
    <property type="match status" value="1"/>
</dbReference>
<dbReference type="InterPro" id="IPR002589">
    <property type="entry name" value="Macro_dom"/>
</dbReference>
<dbReference type="InterPro" id="IPR043472">
    <property type="entry name" value="Macro_dom-like"/>
</dbReference>
<dbReference type="NCBIfam" id="NF001667">
    <property type="entry name" value="PRK00431.2-3"/>
    <property type="match status" value="1"/>
</dbReference>
<dbReference type="PANTHER" id="PTHR11106">
    <property type="entry name" value="GANGLIOSIDE INDUCED DIFFERENTIATION ASSOCIATED PROTEIN 2-RELATED"/>
    <property type="match status" value="1"/>
</dbReference>
<dbReference type="PANTHER" id="PTHR11106:SF111">
    <property type="entry name" value="MACRO DOMAIN-CONTAINING PROTEIN"/>
    <property type="match status" value="1"/>
</dbReference>
<dbReference type="Pfam" id="PF01661">
    <property type="entry name" value="Macro"/>
    <property type="match status" value="1"/>
</dbReference>
<dbReference type="SMART" id="SM00506">
    <property type="entry name" value="A1pp"/>
    <property type="match status" value="1"/>
</dbReference>
<dbReference type="SUPFAM" id="SSF52949">
    <property type="entry name" value="Macro domain-like"/>
    <property type="match status" value="1"/>
</dbReference>
<dbReference type="PROSITE" id="PS51154">
    <property type="entry name" value="MACRO"/>
    <property type="match status" value="1"/>
</dbReference>
<sequence length="182" mass="19369">MEFSVGGVEVVLMRGDITEVEADAIVNAANSYLEHGGGVAGAIVRKGGQVIQEESREWVRKHGPVPVGDVAVTSAGRLKAKYVIHAVGPRCGVEPIEKLAEAVKNALLKAEELGLVSIALPAISTGIFGCPYDAAAEQMATAIREVAPALRSIRRILVVLYGEEAYQKFLEVFKKHLPGGRL</sequence>
<name>Y1111_PYRAE</name>
<proteinExistence type="predicted"/>
<organism>
    <name type="scientific">Pyrobaculum aerophilum (strain ATCC 51768 / DSM 7523 / JCM 9630 / CIP 104966 / NBRC 100827 / IM2)</name>
    <dbReference type="NCBI Taxonomy" id="178306"/>
    <lineage>
        <taxon>Archaea</taxon>
        <taxon>Thermoproteota</taxon>
        <taxon>Thermoprotei</taxon>
        <taxon>Thermoproteales</taxon>
        <taxon>Thermoproteaceae</taxon>
        <taxon>Pyrobaculum</taxon>
    </lineage>
</organism>
<gene>
    <name type="ordered locus">PAE1111</name>
</gene>
<keyword id="KW-1185">Reference proteome</keyword>
<accession>Q8ZXT3</accession>
<evidence type="ECO:0000255" key="1">
    <source>
        <dbReference type="PROSITE-ProRule" id="PRU00490"/>
    </source>
</evidence>
<feature type="chain" id="PRO_0000089232" description="Uncharacterized protein PAE1111">
    <location>
        <begin position="1"/>
        <end position="182"/>
    </location>
</feature>
<feature type="domain" description="Macro" evidence="1">
    <location>
        <begin position="1"/>
        <end position="177"/>
    </location>
</feature>
<reference key="1">
    <citation type="journal article" date="2002" name="Proc. Natl. Acad. Sci. U.S.A.">
        <title>Genome sequence of the hyperthermophilic crenarchaeon Pyrobaculum aerophilum.</title>
        <authorList>
            <person name="Fitz-Gibbon S.T."/>
            <person name="Ladner H."/>
            <person name="Kim U.-J."/>
            <person name="Stetter K.O."/>
            <person name="Simon M.I."/>
            <person name="Miller J.H."/>
        </authorList>
    </citation>
    <scope>NUCLEOTIDE SEQUENCE [LARGE SCALE GENOMIC DNA]</scope>
    <source>
        <strain>ATCC 51768 / DSM 7523 / JCM 9630 / CIP 104966 / NBRC 100827 / IM2</strain>
    </source>
</reference>
<protein>
    <recommendedName>
        <fullName>Uncharacterized protein PAE1111</fullName>
    </recommendedName>
</protein>